<evidence type="ECO:0000269" key="1">
    <source>
    </source>
</evidence>
<evidence type="ECO:0000269" key="2">
    <source>
    </source>
</evidence>
<evidence type="ECO:0000303" key="3">
    <source>
    </source>
</evidence>
<evidence type="ECO:0000303" key="4">
    <source>
    </source>
</evidence>
<evidence type="ECO:0000305" key="5"/>
<evidence type="ECO:0000305" key="6">
    <source>
    </source>
</evidence>
<feature type="signal peptide" evidence="2">
    <location>
        <begin position="1"/>
        <end position="22"/>
    </location>
</feature>
<feature type="peptide" id="PRO_0000393447" description="Imcroporin" evidence="2">
    <location>
        <begin position="23"/>
        <end position="39"/>
    </location>
</feature>
<feature type="propeptide" id="PRO_0000393448" evidence="6">
    <location>
        <begin position="45"/>
        <end position="74"/>
    </location>
</feature>
<feature type="modified residue" description="Lysine amide; partial" evidence="2">
    <location>
        <position position="39"/>
    </location>
</feature>
<name>NDB47_ISOMC</name>
<protein>
    <recommendedName>
        <fullName evidence="4">Imcroporin</fullName>
    </recommendedName>
    <alternativeName>
        <fullName evidence="3">Non-disulfide-bridged peptide 4.7</fullName>
        <shortName evidence="3">NDBP-4.7</shortName>
    </alternativeName>
</protein>
<organism>
    <name type="scientific">Isometrus maculatus</name>
    <name type="common">Lesser brown scorpion</name>
    <name type="synonym">Scorpio maculatus</name>
    <dbReference type="NCBI Taxonomy" id="497827"/>
    <lineage>
        <taxon>Eukaryota</taxon>
        <taxon>Metazoa</taxon>
        <taxon>Ecdysozoa</taxon>
        <taxon>Arthropoda</taxon>
        <taxon>Chelicerata</taxon>
        <taxon>Arachnida</taxon>
        <taxon>Scorpiones</taxon>
        <taxon>Buthida</taxon>
        <taxon>Buthoidea</taxon>
        <taxon>Buthidae</taxon>
        <taxon>Isometrus</taxon>
    </lineage>
</organism>
<reference key="1">
    <citation type="journal article" date="2009" name="Antimicrob. Agents Chemother.">
        <title>Imcroporin, a new cationic antimicrobial peptide from the venom of the scorpion Isometrus maculates.</title>
        <authorList>
            <person name="Zhao Z."/>
            <person name="Ma Y."/>
            <person name="Dai C."/>
            <person name="Zhao R."/>
            <person name="Li S."/>
            <person name="Wu Y."/>
            <person name="Cao Z."/>
            <person name="Li W."/>
        </authorList>
    </citation>
    <scope>NUCLEOTIDE SEQUENCE [MRNA]</scope>
    <scope>SYNTHESIS</scope>
    <scope>FUNCTION</scope>
    <scope>TISSUE SPECIFICITY</scope>
    <source>
        <tissue>Venom gland</tissue>
    </source>
</reference>
<reference key="2">
    <citation type="journal article" date="2014" name="Peptides">
        <title>Scorpion venom peptides with no disulfide bridges: a review.</title>
        <authorList>
            <person name="Almaaytah A."/>
            <person name="Albalas Q."/>
        </authorList>
    </citation>
    <scope>NOMENCLATURE</scope>
</reference>
<reference key="3">
    <citation type="journal article" date="2017" name="Toxicon">
        <title>Complete de novo sequencing of antimicrobial peptides in the venom of the scorpion Isometrus maculatus.</title>
        <authorList>
            <person name="Miyashita M."/>
            <person name="Kitanaka A."/>
            <person name="Yakio M."/>
            <person name="Yamazaki Y."/>
            <person name="Nakagawa Y."/>
            <person name="Miyagawa H."/>
        </authorList>
    </citation>
    <scope>PROTEIN SEQUENCE OF 23-39</scope>
    <scope>SUBCELLULAR LOCATION</scope>
    <scope>MASS SPECTROMETRY</scope>
    <scope>IDENTIFICATION BY MASS SPECTROMETRY</scope>
    <scope>AMIDATION AT LYS-39</scope>
    <source>
        <tissue evidence="4">Venom</tissue>
    </source>
</reference>
<accession>C7B247</accession>
<comment type="function">
    <text evidence="1">Has potent antibacterial activity against Gram-positive bacteria M.luteus, B.thuringiensis, S.aureus and B.subtilis, but not Gram-negative bacteria. Shows a weak cytotoxicity effect against mammalian cell lines and relatively low hemolytic activity against human erythrocytes.</text>
</comment>
<comment type="subcellular location">
    <subcellularLocation>
        <location evidence="2">Secreted</location>
    </subcellularLocation>
    <subcellularLocation>
        <location evidence="6">Target cell membrane</location>
    </subcellularLocation>
    <text evidence="6">Probably forms a helical membrane channel in the prey.</text>
</comment>
<comment type="tissue specificity">
    <text evidence="1">Expressed by the venom gland.</text>
</comment>
<comment type="mass spectrometry">
    <text>Amidated.</text>
</comment>
<comment type="mass spectrometry"/>
<comment type="miscellaneous">
    <text evidence="6">A fragment comprising residues 4-17 has been detected in venom but it is unclear whether it has a physiological role or is simply due to degradation.</text>
</comment>
<comment type="similarity">
    <text evidence="5">Belongs to the non-disulfide-bridged peptide (NDBP) superfamily. Short antimicrobial peptide (group 4) family.</text>
</comment>
<sequence>MKFQYLLAVFLIVLVVTDHCQAFFSLLPSLIGGLVSAIKGRRRRQLEARFEPKQRNFRKRELDFEKLFANMPDY</sequence>
<keyword id="KW-0027">Amidation</keyword>
<keyword id="KW-0044">Antibiotic</keyword>
<keyword id="KW-0929">Antimicrobial</keyword>
<keyword id="KW-0165">Cleavage on pair of basic residues</keyword>
<keyword id="KW-0903">Direct protein sequencing</keyword>
<keyword id="KW-0472">Membrane</keyword>
<keyword id="KW-0964">Secreted</keyword>
<keyword id="KW-0732">Signal</keyword>
<keyword id="KW-1052">Target cell membrane</keyword>
<keyword id="KW-1053">Target membrane</keyword>
<dbReference type="EMBL" id="FJ750949">
    <property type="protein sequence ID" value="ACT78488.1"/>
    <property type="molecule type" value="mRNA"/>
</dbReference>
<dbReference type="SMR" id="C7B247"/>
<dbReference type="GO" id="GO:0005576">
    <property type="term" value="C:extracellular region"/>
    <property type="evidence" value="ECO:0007669"/>
    <property type="project" value="UniProtKB-SubCell"/>
</dbReference>
<dbReference type="GO" id="GO:0016020">
    <property type="term" value="C:membrane"/>
    <property type="evidence" value="ECO:0007669"/>
    <property type="project" value="UniProtKB-KW"/>
</dbReference>
<dbReference type="GO" id="GO:0044218">
    <property type="term" value="C:other organism cell membrane"/>
    <property type="evidence" value="ECO:0007669"/>
    <property type="project" value="UniProtKB-KW"/>
</dbReference>
<dbReference type="GO" id="GO:0042742">
    <property type="term" value="P:defense response to bacterium"/>
    <property type="evidence" value="ECO:0007669"/>
    <property type="project" value="UniProtKB-KW"/>
</dbReference>
<proteinExistence type="evidence at protein level"/>